<organism>
    <name type="scientific">Pongo abelii</name>
    <name type="common">Sumatran orangutan</name>
    <name type="synonym">Pongo pygmaeus abelii</name>
    <dbReference type="NCBI Taxonomy" id="9601"/>
    <lineage>
        <taxon>Eukaryota</taxon>
        <taxon>Metazoa</taxon>
        <taxon>Chordata</taxon>
        <taxon>Craniata</taxon>
        <taxon>Vertebrata</taxon>
        <taxon>Euteleostomi</taxon>
        <taxon>Mammalia</taxon>
        <taxon>Eutheria</taxon>
        <taxon>Euarchontoglires</taxon>
        <taxon>Primates</taxon>
        <taxon>Haplorrhini</taxon>
        <taxon>Catarrhini</taxon>
        <taxon>Hominidae</taxon>
        <taxon>Pongo</taxon>
    </lineage>
</organism>
<feature type="initiator methionine" description="Removed" evidence="4">
    <location>
        <position position="1"/>
    </location>
</feature>
<feature type="chain" id="PRO_0000284441" description="ATP-dependent 6-phosphofructokinase, liver type">
    <location>
        <begin position="2"/>
        <end position="780"/>
    </location>
</feature>
<feature type="region of interest" description="N-terminal catalytic PFK domain 1">
    <location>
        <begin position="2"/>
        <end position="390"/>
    </location>
</feature>
<feature type="region of interest" description="Interdomain linker">
    <location>
        <begin position="391"/>
        <end position="400"/>
    </location>
</feature>
<feature type="region of interest" description="C-terminal regulatory PFK domain 2">
    <location>
        <begin position="401"/>
        <end position="780"/>
    </location>
</feature>
<feature type="active site" description="Proton acceptor" evidence="6">
    <location>
        <position position="166"/>
    </location>
</feature>
<feature type="binding site" evidence="6">
    <location>
        <position position="25"/>
    </location>
    <ligand>
        <name>ATP</name>
        <dbReference type="ChEBI" id="CHEBI:30616"/>
    </ligand>
</feature>
<feature type="binding site" evidence="6">
    <location>
        <begin position="88"/>
        <end position="89"/>
    </location>
    <ligand>
        <name>ATP</name>
        <dbReference type="ChEBI" id="CHEBI:30616"/>
    </ligand>
</feature>
<feature type="binding site" evidence="6">
    <location>
        <begin position="118"/>
        <end position="121"/>
    </location>
    <ligand>
        <name>ATP</name>
        <dbReference type="ChEBI" id="CHEBI:30616"/>
    </ligand>
</feature>
<feature type="binding site" evidence="6">
    <location>
        <position position="119"/>
    </location>
    <ligand>
        <name>Mg(2+)</name>
        <dbReference type="ChEBI" id="CHEBI:18420"/>
        <note>catalytic</note>
    </ligand>
</feature>
<feature type="binding site" description="in other chain" evidence="6">
    <location>
        <begin position="164"/>
        <end position="166"/>
    </location>
    <ligand>
        <name>substrate</name>
        <note>ligand shared between dimeric partners</note>
    </ligand>
</feature>
<feature type="binding site" evidence="6">
    <location>
        <position position="201"/>
    </location>
    <ligand>
        <name>substrate</name>
        <note>ligand shared between dimeric partners</note>
    </ligand>
</feature>
<feature type="binding site" description="in other chain" evidence="6">
    <location>
        <begin position="208"/>
        <end position="210"/>
    </location>
    <ligand>
        <name>substrate</name>
        <note>ligand shared between dimeric partners</note>
    </ligand>
</feature>
<feature type="binding site" description="in other chain" evidence="6">
    <location>
        <position position="264"/>
    </location>
    <ligand>
        <name>substrate</name>
        <note>ligand shared between dimeric partners</note>
    </ligand>
</feature>
<feature type="binding site" evidence="6">
    <location>
        <position position="292"/>
    </location>
    <ligand>
        <name>substrate</name>
        <note>ligand shared between dimeric partners</note>
    </ligand>
</feature>
<feature type="binding site" description="in other chain" evidence="6">
    <location>
        <begin position="298"/>
        <end position="301"/>
    </location>
    <ligand>
        <name>substrate</name>
        <note>ligand shared between dimeric partners</note>
    </ligand>
</feature>
<feature type="binding site" description="in other chain" evidence="6">
    <location>
        <position position="470"/>
    </location>
    <ligand>
        <name>beta-D-fructose 2,6-bisphosphate</name>
        <dbReference type="ChEBI" id="CHEBI:58579"/>
        <note>allosteric activator; ligand shared between dimeric partners</note>
    </ligand>
</feature>
<feature type="binding site" description="in other chain" evidence="6">
    <location>
        <begin position="527"/>
        <end position="531"/>
    </location>
    <ligand>
        <name>beta-D-fructose 2,6-bisphosphate</name>
        <dbReference type="ChEBI" id="CHEBI:58579"/>
        <note>allosteric activator; ligand shared between dimeric partners</note>
    </ligand>
</feature>
<feature type="binding site" evidence="6">
    <location>
        <position position="565"/>
    </location>
    <ligand>
        <name>beta-D-fructose 2,6-bisphosphate</name>
        <dbReference type="ChEBI" id="CHEBI:58579"/>
        <note>allosteric activator; ligand shared between dimeric partners</note>
    </ligand>
</feature>
<feature type="binding site" description="in other chain" evidence="6">
    <location>
        <begin position="572"/>
        <end position="574"/>
    </location>
    <ligand>
        <name>beta-D-fructose 2,6-bisphosphate</name>
        <dbReference type="ChEBI" id="CHEBI:58579"/>
        <note>allosteric activator; ligand shared between dimeric partners</note>
    </ligand>
</feature>
<feature type="binding site" description="in other chain" evidence="6">
    <location>
        <position position="628"/>
    </location>
    <ligand>
        <name>beta-D-fructose 2,6-bisphosphate</name>
        <dbReference type="ChEBI" id="CHEBI:58579"/>
        <note>allosteric activator; ligand shared between dimeric partners</note>
    </ligand>
</feature>
<feature type="binding site" evidence="6">
    <location>
        <position position="654"/>
    </location>
    <ligand>
        <name>beta-D-fructose 2,6-bisphosphate</name>
        <dbReference type="ChEBI" id="CHEBI:58579"/>
        <note>allosteric activator; ligand shared between dimeric partners</note>
    </ligand>
</feature>
<feature type="binding site" description="in other chain" evidence="6">
    <location>
        <begin position="660"/>
        <end position="663"/>
    </location>
    <ligand>
        <name>beta-D-fructose 2,6-bisphosphate</name>
        <dbReference type="ChEBI" id="CHEBI:58579"/>
        <note>allosteric activator; ligand shared between dimeric partners</note>
    </ligand>
</feature>
<feature type="binding site" description="in other chain" evidence="6">
    <location>
        <position position="734"/>
    </location>
    <ligand>
        <name>beta-D-fructose 2,6-bisphosphate</name>
        <dbReference type="ChEBI" id="CHEBI:58579"/>
        <note>allosteric activator; ligand shared between dimeric partners</note>
    </ligand>
</feature>
<feature type="modified residue" description="N-acetylalanine" evidence="4">
    <location>
        <position position="2"/>
    </location>
</feature>
<feature type="modified residue" description="Phosphoserine" evidence="5">
    <location>
        <position position="377"/>
    </location>
</feature>
<feature type="modified residue" description="Phosphotyrosine" evidence="3">
    <location>
        <position position="640"/>
    </location>
</feature>
<feature type="modified residue" description="Phosphoserine" evidence="2">
    <location>
        <position position="775"/>
    </location>
</feature>
<feature type="glycosylation site" description="O-linked (GlcNAc) serine" evidence="1">
    <location>
        <position position="529"/>
    </location>
</feature>
<evidence type="ECO:0000250" key="1"/>
<evidence type="ECO:0000250" key="2">
    <source>
        <dbReference type="UniProtKB" id="P00511"/>
    </source>
</evidence>
<evidence type="ECO:0000250" key="3">
    <source>
        <dbReference type="UniProtKB" id="P12382"/>
    </source>
</evidence>
<evidence type="ECO:0000250" key="4">
    <source>
        <dbReference type="UniProtKB" id="P17858"/>
    </source>
</evidence>
<evidence type="ECO:0000250" key="5">
    <source>
        <dbReference type="UniProtKB" id="P47857"/>
    </source>
</evidence>
<evidence type="ECO:0000255" key="6">
    <source>
        <dbReference type="HAMAP-Rule" id="MF_03184"/>
    </source>
</evidence>
<evidence type="ECO:0000305" key="7"/>
<proteinExistence type="evidence at transcript level"/>
<keyword id="KW-0007">Acetylation</keyword>
<keyword id="KW-0021">Allosteric enzyme</keyword>
<keyword id="KW-0067">ATP-binding</keyword>
<keyword id="KW-0963">Cytoplasm</keyword>
<keyword id="KW-0324">Glycolysis</keyword>
<keyword id="KW-0325">Glycoprotein</keyword>
<keyword id="KW-0418">Kinase</keyword>
<keyword id="KW-0460">Magnesium</keyword>
<keyword id="KW-0479">Metal-binding</keyword>
<keyword id="KW-0547">Nucleotide-binding</keyword>
<keyword id="KW-0597">Phosphoprotein</keyword>
<keyword id="KW-1185">Reference proteome</keyword>
<keyword id="KW-0808">Transferase</keyword>
<name>PFKAL_PONAB</name>
<accession>Q5R7V5</accession>
<comment type="function">
    <text evidence="3 6">Catalyzes the phosphorylation of D-fructose 6-phosphate to fructose 1,6-bisphosphate by ATP, the first committing step of glycolysis (By similarity). Negatively regulates the phagocyte oxidative burst in response to bacterial infection by controlling cellular NADPH biosynthesis and NADPH oxidase-derived reactive oxygen species. Upon macrophage activation, drives the metabolic switch toward glycolysis, thus preventing glucose turnover that produces NADPH via pentose phosphate pathway (By similarity).</text>
</comment>
<comment type="catalytic activity">
    <reaction evidence="6">
        <text>beta-D-fructose 6-phosphate + ATP = beta-D-fructose 1,6-bisphosphate + ADP + H(+)</text>
        <dbReference type="Rhea" id="RHEA:16109"/>
        <dbReference type="ChEBI" id="CHEBI:15378"/>
        <dbReference type="ChEBI" id="CHEBI:30616"/>
        <dbReference type="ChEBI" id="CHEBI:32966"/>
        <dbReference type="ChEBI" id="CHEBI:57634"/>
        <dbReference type="ChEBI" id="CHEBI:456216"/>
        <dbReference type="EC" id="2.7.1.11"/>
    </reaction>
</comment>
<comment type="cofactor">
    <cofactor evidence="6">
        <name>Mg(2+)</name>
        <dbReference type="ChEBI" id="CHEBI:18420"/>
    </cofactor>
</comment>
<comment type="activity regulation">
    <text evidence="6">Allosterically activated by ADP, AMP, or fructose 2,6-bisphosphate, and allosterically inhibited by ATP or citrate. GlcNAcylation by OGT overcomes allosteric regulation (By similarity).</text>
</comment>
<comment type="pathway">
    <text evidence="6">Carbohydrate degradation; glycolysis; D-glyceraldehyde 3-phosphate and glycerone phosphate from D-glucose: step 3/4.</text>
</comment>
<comment type="subunit">
    <text evidence="6 7">Homo- and heterotetramers (By similarity). Phosphofructokinase (PFK) enzyme functions as a tetramer composed of different combinations of 3 types of subunits, called PFKM (M), PFKL (L) and PFKP (P). The composition of the PFK tetramer differs according to the tissue type it is present in. The kinetic and regulatory properties of the tetrameric enzyme are dependent on the subunit composition, hence can vary across tissues (Probable).</text>
</comment>
<comment type="subcellular location">
    <subcellularLocation>
        <location evidence="6">Cytoplasm</location>
    </subcellularLocation>
</comment>
<comment type="PTM">
    <text evidence="1">GlcNAcylation at Ser-529 by OGT decreases enzyme activity, leading to redirect glucose flux through the oxidative pentose phosphate pathway. Glycosylation is stimulated by both hypoxia and glucose deprivation (By similarity).</text>
</comment>
<comment type="similarity">
    <text evidence="6">Belongs to the phosphofructokinase type A (PFKA) family. ATP-dependent PFK group I subfamily. Eukaryotic two domain clade 'E' sub-subfamily.</text>
</comment>
<protein>
    <recommendedName>
        <fullName evidence="6">ATP-dependent 6-phosphofructokinase, liver type</fullName>
        <shortName evidence="6">ATP-PFK</shortName>
        <shortName>PFK-L</shortName>
        <ecNumber evidence="6">2.7.1.11</ecNumber>
    </recommendedName>
    <alternativeName>
        <fullName>6-phosphofructokinase type B</fullName>
    </alternativeName>
    <alternativeName>
        <fullName>Phosphofructo-1-kinase isozyme B</fullName>
        <shortName>PFK-B</shortName>
    </alternativeName>
    <alternativeName>
        <fullName evidence="6">Phosphohexokinase</fullName>
    </alternativeName>
</protein>
<reference key="1">
    <citation type="submission" date="2004-11" db="EMBL/GenBank/DDBJ databases">
        <authorList>
            <consortium name="The German cDNA consortium"/>
        </authorList>
    </citation>
    <scope>NUCLEOTIDE SEQUENCE [LARGE SCALE MRNA]</scope>
    <source>
        <tissue>Brain cortex</tissue>
    </source>
</reference>
<gene>
    <name type="primary">PFKL</name>
</gene>
<dbReference type="EC" id="2.7.1.11" evidence="6"/>
<dbReference type="EMBL" id="CR860004">
    <property type="protein sequence ID" value="CAH92155.1"/>
    <property type="molecule type" value="mRNA"/>
</dbReference>
<dbReference type="RefSeq" id="NP_001126263.1">
    <property type="nucleotide sequence ID" value="NM_001132791.1"/>
</dbReference>
<dbReference type="SMR" id="Q5R7V5"/>
<dbReference type="FunCoup" id="Q5R7V5">
    <property type="interactions" value="1745"/>
</dbReference>
<dbReference type="STRING" id="9601.ENSPPYP00000012821"/>
<dbReference type="GlyCosmos" id="Q5R7V5">
    <property type="glycosylation" value="1 site, No reported glycans"/>
</dbReference>
<dbReference type="GeneID" id="100173235"/>
<dbReference type="KEGG" id="pon:100173235"/>
<dbReference type="CTD" id="5211"/>
<dbReference type="eggNOG" id="KOG2440">
    <property type="taxonomic scope" value="Eukaryota"/>
</dbReference>
<dbReference type="InParanoid" id="Q5R7V5"/>
<dbReference type="OrthoDB" id="537915at2759"/>
<dbReference type="UniPathway" id="UPA00109">
    <property type="reaction ID" value="UER00182"/>
</dbReference>
<dbReference type="Proteomes" id="UP000001595">
    <property type="component" value="Unplaced"/>
</dbReference>
<dbReference type="GO" id="GO:0005945">
    <property type="term" value="C:6-phosphofructokinase complex"/>
    <property type="evidence" value="ECO:0007669"/>
    <property type="project" value="TreeGrafter"/>
</dbReference>
<dbReference type="GO" id="GO:0016020">
    <property type="term" value="C:membrane"/>
    <property type="evidence" value="ECO:0007669"/>
    <property type="project" value="TreeGrafter"/>
</dbReference>
<dbReference type="GO" id="GO:0003872">
    <property type="term" value="F:6-phosphofructokinase activity"/>
    <property type="evidence" value="ECO:0000250"/>
    <property type="project" value="UniProtKB"/>
</dbReference>
<dbReference type="GO" id="GO:0016208">
    <property type="term" value="F:AMP binding"/>
    <property type="evidence" value="ECO:0007669"/>
    <property type="project" value="TreeGrafter"/>
</dbReference>
<dbReference type="GO" id="GO:0005524">
    <property type="term" value="F:ATP binding"/>
    <property type="evidence" value="ECO:0007669"/>
    <property type="project" value="UniProtKB-KW"/>
</dbReference>
<dbReference type="GO" id="GO:0070095">
    <property type="term" value="F:fructose-6-phosphate binding"/>
    <property type="evidence" value="ECO:0007669"/>
    <property type="project" value="TreeGrafter"/>
</dbReference>
<dbReference type="GO" id="GO:0042802">
    <property type="term" value="F:identical protein binding"/>
    <property type="evidence" value="ECO:0007669"/>
    <property type="project" value="TreeGrafter"/>
</dbReference>
<dbReference type="GO" id="GO:0046872">
    <property type="term" value="F:metal ion binding"/>
    <property type="evidence" value="ECO:0007669"/>
    <property type="project" value="UniProtKB-KW"/>
</dbReference>
<dbReference type="GO" id="GO:0048029">
    <property type="term" value="F:monosaccharide binding"/>
    <property type="evidence" value="ECO:0007669"/>
    <property type="project" value="TreeGrafter"/>
</dbReference>
<dbReference type="GO" id="GO:0061621">
    <property type="term" value="P:canonical glycolysis"/>
    <property type="evidence" value="ECO:0007669"/>
    <property type="project" value="TreeGrafter"/>
</dbReference>
<dbReference type="GO" id="GO:0030388">
    <property type="term" value="P:fructose 1,6-bisphosphate metabolic process"/>
    <property type="evidence" value="ECO:0000250"/>
    <property type="project" value="UniProtKB"/>
</dbReference>
<dbReference type="GO" id="GO:0006002">
    <property type="term" value="P:fructose 6-phosphate metabolic process"/>
    <property type="evidence" value="ECO:0007669"/>
    <property type="project" value="InterPro"/>
</dbReference>
<dbReference type="GO" id="GO:0006096">
    <property type="term" value="P:glycolytic process"/>
    <property type="evidence" value="ECO:0000250"/>
    <property type="project" value="UniProtKB"/>
</dbReference>
<dbReference type="GO" id="GO:0009749">
    <property type="term" value="P:response to glucose"/>
    <property type="evidence" value="ECO:0000250"/>
    <property type="project" value="UniProtKB"/>
</dbReference>
<dbReference type="CDD" id="cd00764">
    <property type="entry name" value="Eukaryotic_PFK"/>
    <property type="match status" value="1"/>
</dbReference>
<dbReference type="FunFam" id="3.40.50.460:FF:000001">
    <property type="entry name" value="ATP-dependent 6-phosphofructokinase"/>
    <property type="match status" value="1"/>
</dbReference>
<dbReference type="FunFam" id="3.40.50.460:FF:000003">
    <property type="entry name" value="ATP-dependent 6-phosphofructokinase"/>
    <property type="match status" value="1"/>
</dbReference>
<dbReference type="FunFam" id="3.40.50.450:FF:000043">
    <property type="entry name" value="ATP-dependent 6-phosphofructokinase, platelet type"/>
    <property type="match status" value="1"/>
</dbReference>
<dbReference type="Gene3D" id="3.40.50.450">
    <property type="match status" value="2"/>
</dbReference>
<dbReference type="Gene3D" id="3.40.50.460">
    <property type="entry name" value="Phosphofructokinase domain"/>
    <property type="match status" value="2"/>
</dbReference>
<dbReference type="HAMAP" id="MF_03184">
    <property type="entry name" value="Phosphofructokinase_I_E"/>
    <property type="match status" value="1"/>
</dbReference>
<dbReference type="InterPro" id="IPR009161">
    <property type="entry name" value="6-Pfructokinase_euk"/>
</dbReference>
<dbReference type="InterPro" id="IPR022953">
    <property type="entry name" value="ATP_PFK"/>
</dbReference>
<dbReference type="InterPro" id="IPR041914">
    <property type="entry name" value="PFK_vert-type"/>
</dbReference>
<dbReference type="InterPro" id="IPR015912">
    <property type="entry name" value="Phosphofructokinase_CS"/>
</dbReference>
<dbReference type="InterPro" id="IPR000023">
    <property type="entry name" value="Phosphofructokinase_dom"/>
</dbReference>
<dbReference type="InterPro" id="IPR035966">
    <property type="entry name" value="PKF_sf"/>
</dbReference>
<dbReference type="NCBIfam" id="TIGR02478">
    <property type="entry name" value="6PF1K_euk"/>
    <property type="match status" value="1"/>
</dbReference>
<dbReference type="PANTHER" id="PTHR13697:SF14">
    <property type="entry name" value="ATP-DEPENDENT 6-PHOSPHOFRUCTOKINASE, LIVER TYPE"/>
    <property type="match status" value="1"/>
</dbReference>
<dbReference type="PANTHER" id="PTHR13697">
    <property type="entry name" value="PHOSPHOFRUCTOKINASE"/>
    <property type="match status" value="1"/>
</dbReference>
<dbReference type="Pfam" id="PF00365">
    <property type="entry name" value="PFK"/>
    <property type="match status" value="2"/>
</dbReference>
<dbReference type="PIRSF" id="PIRSF000533">
    <property type="entry name" value="ATP_PFK_euk"/>
    <property type="match status" value="1"/>
</dbReference>
<dbReference type="PRINTS" id="PR00476">
    <property type="entry name" value="PHFRCTKINASE"/>
</dbReference>
<dbReference type="SUPFAM" id="SSF53784">
    <property type="entry name" value="Phosphofructokinase"/>
    <property type="match status" value="2"/>
</dbReference>
<dbReference type="PROSITE" id="PS00433">
    <property type="entry name" value="PHOSPHOFRUCTOKINASE"/>
    <property type="match status" value="2"/>
</dbReference>
<sequence>MAAVDLEKLRASGAGKAIGVLTSGGDAQGMNAAVRAVTRMGIYVGAKVFLIHEGYEGLVEGGENIKQANWLSVSNIIQLGGTVIGSARCKAFTTREGRRAAAYNLVQHGITNLCVIGGDGSLTGANIFRSEWGSLLEELVAEGKISETMARTYSHLNIAGLVGSIDNDFCGTDMTIGTDSALHRIMEVIDAITTTAQSHQRTFVLEVMGRRCGYLALVSALASGADWLFIPEAPPEDGWENFMCERLGETRSRGSRLNIIIIAEGAIDRDGKPISSSYVKDLVVQRLGFDTRVTVLGHVQRGGTPSAFDRVLSSKMAMEAVMALLEATHDTPACVVTLSGNQSVRLPLMECVQMTKEVQKAMDDKRFDEAIQLRGGSFENNWNIYKLLAHQKPPKEKSNFSLAILNVGAPAAGMNAAVRSAVRTGISHGHTVYVVHDGFEGLAKGQVQEVGWHDVAGWLGRGGSMLGTKRTLPKGQLESIVENIRIYGIHALLVVGGFEAYEGVLQLVEARGRYEELCIVMCVIPATISNNVPGTDFSLGSDTAVNAAMESCDRIKQSASGTKRRVFIVETMGGYCGYLATVTGIAVGADAAYVFEDPFNIHDLKVNVEHMTEKMKTDIQRGLVLRNEKCHDYYTTEFLYNLYSSEGKGVFDCRTNVLGHLQQGGAPTPFDRNYGTKLGVKAMLWLSEKLRDVYRKGRVFANAPDSACVIGLKKKAVAFSPVTELKKDTDFEHRMPREQWWLSLRLMLKMLAQYRISMAAYVSGELEHVTRRTLSMDKGF</sequence>